<comment type="catalytic activity">
    <reaction evidence="3">
        <text>L-serine + acetyl-CoA = O-acetyl-L-serine + CoA</text>
        <dbReference type="Rhea" id="RHEA:24560"/>
        <dbReference type="ChEBI" id="CHEBI:33384"/>
        <dbReference type="ChEBI" id="CHEBI:57287"/>
        <dbReference type="ChEBI" id="CHEBI:57288"/>
        <dbReference type="ChEBI" id="CHEBI:58340"/>
        <dbReference type="EC" id="2.3.1.30"/>
    </reaction>
    <physiologicalReaction direction="left-to-right" evidence="3">
        <dbReference type="Rhea" id="RHEA:24561"/>
    </physiologicalReaction>
</comment>
<comment type="biophysicochemical properties">
    <kinetics>
        <KM evidence="3">121.4 mM for L-Ser (at pH 8 and 30 degrees Celsius)</KM>
        <KM evidence="3">24.5 mM for acetyl-CoA (at pH 8 and 30 degrees Celsius)</KM>
    </kinetics>
</comment>
<comment type="pathway">
    <text evidence="3">Amino-acid biosynthesis; L-cysteine biosynthesis; L-cysteine from L-serine: step 1/2.</text>
</comment>
<comment type="subunit">
    <text evidence="4">Homomultimer.</text>
</comment>
<comment type="subcellular location">
    <subcellularLocation>
        <location evidence="3">Cytoplasm</location>
    </subcellularLocation>
</comment>
<comment type="tissue specificity">
    <text evidence="2 3">Ubiquitously expressed at low levels. Localized in vascular tissues, particularly in phloem.</text>
</comment>
<comment type="induction">
    <text evidence="2 3">By cadmium (Cd). Induced in roots under sulfur-deficient conditions.</text>
</comment>
<comment type="similarity">
    <text evidence="6">Belongs to the transferase hexapeptide repeat family.</text>
</comment>
<comment type="sequence caution" evidence="6">
    <conflict type="erroneous gene model prediction">
        <sequence resource="EMBL-CDS" id="AAD45614"/>
    </conflict>
</comment>
<comment type="sequence caution" evidence="6">
    <conflict type="erroneous gene model prediction">
        <sequence resource="EMBL-CDS" id="AAM15485"/>
    </conflict>
</comment>
<feature type="chain" id="PRO_0000068691" description="Serine acetyltransferase 2">
    <location>
        <begin position="1"/>
        <end position="323"/>
    </location>
</feature>
<feature type="region of interest" description="Disordered" evidence="1">
    <location>
        <begin position="302"/>
        <end position="323"/>
    </location>
</feature>
<feature type="compositionally biased region" description="Basic and acidic residues" evidence="1">
    <location>
        <begin position="313"/>
        <end position="323"/>
    </location>
</feature>
<reference key="1">
    <citation type="journal article" date="2003" name="Plant Mol. Biol.">
        <title>The serine acetyltransferase gene family in Arabidopsis thaliana and the regulation of its expression by cadmium.</title>
        <authorList>
            <person name="Howarth J.R."/>
            <person name="Dominguez-Solis J.R."/>
            <person name="Gutierrez-Alcala G."/>
            <person name="Wray J.L."/>
            <person name="Romero L.C."/>
            <person name="Gotor C."/>
        </authorList>
    </citation>
    <scope>NUCLEOTIDE SEQUENCE [MRNA]</scope>
    <scope>INDUCTION</scope>
    <scope>TISSUE SPECIFICITY</scope>
    <scope>SUBUNIT</scope>
    <source>
        <strain>cv. Columbia</strain>
    </source>
</reference>
<reference key="2">
    <citation type="submission" date="1999-07" db="EMBL/GenBank/DDBJ databases">
        <title>Gene sequence of serine acetyltransferase 2 from A. thaliana.</title>
        <authorList>
            <person name="Ruffet M.-L."/>
            <person name="Lebrun M."/>
            <person name="Droux M."/>
            <person name="Douce R."/>
        </authorList>
    </citation>
    <scope>NUCLEOTIDE SEQUENCE [GENOMIC DNA]</scope>
    <source>
        <strain>cv. Columbia</strain>
    </source>
</reference>
<reference key="3">
    <citation type="journal article" date="1999" name="Nature">
        <title>Sequence and analysis of chromosome 2 of the plant Arabidopsis thaliana.</title>
        <authorList>
            <person name="Lin X."/>
            <person name="Kaul S."/>
            <person name="Rounsley S.D."/>
            <person name="Shea T.P."/>
            <person name="Benito M.-I."/>
            <person name="Town C.D."/>
            <person name="Fujii C.Y."/>
            <person name="Mason T.M."/>
            <person name="Bowman C.L."/>
            <person name="Barnstead M.E."/>
            <person name="Feldblyum T.V."/>
            <person name="Buell C.R."/>
            <person name="Ketchum K.A."/>
            <person name="Lee J.J."/>
            <person name="Ronning C.M."/>
            <person name="Koo H.L."/>
            <person name="Moffat K.S."/>
            <person name="Cronin L.A."/>
            <person name="Shen M."/>
            <person name="Pai G."/>
            <person name="Van Aken S."/>
            <person name="Umayam L."/>
            <person name="Tallon L.J."/>
            <person name="Gill J.E."/>
            <person name="Adams M.D."/>
            <person name="Carrera A.J."/>
            <person name="Creasy T.H."/>
            <person name="Goodman H.M."/>
            <person name="Somerville C.R."/>
            <person name="Copenhaver G.P."/>
            <person name="Preuss D."/>
            <person name="Nierman W.C."/>
            <person name="White O."/>
            <person name="Eisen J.A."/>
            <person name="Salzberg S.L."/>
            <person name="Fraser C.M."/>
            <person name="Venter J.C."/>
        </authorList>
    </citation>
    <scope>NUCLEOTIDE SEQUENCE [LARGE SCALE GENOMIC DNA]</scope>
    <source>
        <strain>cv. Columbia</strain>
    </source>
</reference>
<reference key="4">
    <citation type="journal article" date="2017" name="Plant J.">
        <title>Araport11: a complete reannotation of the Arabidopsis thaliana reference genome.</title>
        <authorList>
            <person name="Cheng C.Y."/>
            <person name="Krishnakumar V."/>
            <person name="Chan A.P."/>
            <person name="Thibaud-Nissen F."/>
            <person name="Schobel S."/>
            <person name="Town C.D."/>
        </authorList>
    </citation>
    <scope>GENOME REANNOTATION</scope>
    <source>
        <strain>cv. Columbia</strain>
    </source>
</reference>
<reference key="5">
    <citation type="submission" date="2004-09" db="EMBL/GenBank/DDBJ databases">
        <title>Large-scale analysis of RIKEN Arabidopsis full-length (RAFL) cDNAs.</title>
        <authorList>
            <person name="Totoki Y."/>
            <person name="Seki M."/>
            <person name="Ishida J."/>
            <person name="Nakajima M."/>
            <person name="Enju A."/>
            <person name="Kamiya A."/>
            <person name="Narusaka M."/>
            <person name="Shin-i T."/>
            <person name="Nakagawa M."/>
            <person name="Sakamoto N."/>
            <person name="Oishi K."/>
            <person name="Kohara Y."/>
            <person name="Kobayashi M."/>
            <person name="Toyoda A."/>
            <person name="Sakaki Y."/>
            <person name="Sakurai T."/>
            <person name="Iida K."/>
            <person name="Akiyama K."/>
            <person name="Satou M."/>
            <person name="Toyoda T."/>
            <person name="Konagaya A."/>
            <person name="Carninci P."/>
            <person name="Kawai J."/>
            <person name="Hayashizaki Y."/>
            <person name="Shinozaki K."/>
        </authorList>
    </citation>
    <scope>NUCLEOTIDE SEQUENCE [LARGE SCALE MRNA]</scope>
    <source>
        <strain>cv. Columbia</strain>
    </source>
</reference>
<reference key="6">
    <citation type="submission" date="2006-03" db="EMBL/GenBank/DDBJ databases">
        <title>Arabidopsis ORF clones.</title>
        <authorList>
            <person name="Shinn P."/>
            <person name="Chen H."/>
            <person name="Kim C.J."/>
            <person name="Ecker J.R."/>
        </authorList>
    </citation>
    <scope>NUCLEOTIDE SEQUENCE [LARGE SCALE MRNA]</scope>
    <source>
        <strain>cv. Columbia</strain>
    </source>
</reference>
<reference key="7">
    <citation type="journal article" date="2005" name="Plant Physiol.">
        <title>Characterization and expression analysis of a serine acetyltransferase gene family involved in a key step of the sulfur assimilation pathway in Arabidopsis.</title>
        <authorList>
            <person name="Kawashima C.G."/>
            <person name="Berkowitz O."/>
            <person name="Hell R."/>
            <person name="Noji M."/>
            <person name="Saito K."/>
        </authorList>
    </citation>
    <scope>BIOPHYSICOCHEMICAL PROPERTIES</scope>
    <scope>CATALYTIC ACTIVITY</scope>
    <scope>PATHWAY</scope>
    <scope>SUBCELLULAR LOCATION</scope>
    <scope>TISSUE SPECIFICITY</scope>
    <scope>INDUCTION</scope>
    <scope>GENE FAMILY</scope>
    <scope>NOMENCLATURE</scope>
</reference>
<dbReference type="EC" id="2.3.1.30" evidence="3"/>
<dbReference type="EMBL" id="AF112303">
    <property type="protein sequence ID" value="AAD19963.1"/>
    <property type="molecule type" value="mRNA"/>
</dbReference>
<dbReference type="EMBL" id="L78444">
    <property type="protein sequence ID" value="AAD45614.2"/>
    <property type="status" value="ALT_SEQ"/>
    <property type="molecule type" value="Genomic_DNA"/>
</dbReference>
<dbReference type="EMBL" id="AC007509">
    <property type="protein sequence ID" value="AAM15485.1"/>
    <property type="status" value="ALT_SEQ"/>
    <property type="molecule type" value="Genomic_DNA"/>
</dbReference>
<dbReference type="EMBL" id="CP002685">
    <property type="protein sequence ID" value="AEC06660.1"/>
    <property type="molecule type" value="Genomic_DNA"/>
</dbReference>
<dbReference type="EMBL" id="AK176573">
    <property type="protein sequence ID" value="BAD44336.1"/>
    <property type="molecule type" value="mRNA"/>
</dbReference>
<dbReference type="EMBL" id="BT024717">
    <property type="protein sequence ID" value="ABD59055.1"/>
    <property type="molecule type" value="mRNA"/>
</dbReference>
<dbReference type="PIR" id="T08867">
    <property type="entry name" value="T08867"/>
</dbReference>
<dbReference type="SMR" id="Q8S895"/>
<dbReference type="FunCoup" id="Q8S895">
    <property type="interactions" value="479"/>
</dbReference>
<dbReference type="STRING" id="3702.Q8S895"/>
<dbReference type="PaxDb" id="3702-AT2G17640.1"/>
<dbReference type="ProteomicsDB" id="232686"/>
<dbReference type="EnsemblPlants" id="AT2G17640.1">
    <property type="protein sequence ID" value="AT2G17640.1"/>
    <property type="gene ID" value="AT2G17640"/>
</dbReference>
<dbReference type="GeneID" id="816271"/>
<dbReference type="Gramene" id="AT2G17640.1">
    <property type="protein sequence ID" value="AT2G17640.1"/>
    <property type="gene ID" value="AT2G17640"/>
</dbReference>
<dbReference type="KEGG" id="ath:AT2G17640"/>
<dbReference type="Araport" id="AT2G17640"/>
<dbReference type="TAIR" id="AT2G17640">
    <property type="gene designation" value="ATSERAT3"/>
</dbReference>
<dbReference type="eggNOG" id="KOG4750">
    <property type="taxonomic scope" value="Eukaryota"/>
</dbReference>
<dbReference type="HOGENOM" id="CLU_051638_0_0_1"/>
<dbReference type="InParanoid" id="Q8S895"/>
<dbReference type="OMA" id="DVIMHDR"/>
<dbReference type="OrthoDB" id="25818at2759"/>
<dbReference type="PhylomeDB" id="Q8S895"/>
<dbReference type="BRENDA" id="2.3.1.30">
    <property type="organism ID" value="399"/>
</dbReference>
<dbReference type="SABIO-RK" id="Q8S895"/>
<dbReference type="UniPathway" id="UPA00136">
    <property type="reaction ID" value="UER00199"/>
</dbReference>
<dbReference type="PRO" id="PR:Q8S895"/>
<dbReference type="Proteomes" id="UP000006548">
    <property type="component" value="Chromosome 2"/>
</dbReference>
<dbReference type="ExpressionAtlas" id="Q8S895">
    <property type="expression patterns" value="baseline and differential"/>
</dbReference>
<dbReference type="GO" id="GO:0005829">
    <property type="term" value="C:cytosol"/>
    <property type="evidence" value="ECO:0000314"/>
    <property type="project" value="TAIR"/>
</dbReference>
<dbReference type="GO" id="GO:0009001">
    <property type="term" value="F:serine O-acetyltransferase activity"/>
    <property type="evidence" value="ECO:0000314"/>
    <property type="project" value="TAIR"/>
</dbReference>
<dbReference type="GO" id="GO:0006535">
    <property type="term" value="P:cysteine biosynthetic process from serine"/>
    <property type="evidence" value="ECO:0007669"/>
    <property type="project" value="InterPro"/>
</dbReference>
<dbReference type="GO" id="GO:0000103">
    <property type="term" value="P:sulfate assimilation"/>
    <property type="evidence" value="ECO:0000304"/>
    <property type="project" value="TAIR"/>
</dbReference>
<dbReference type="CDD" id="cd03354">
    <property type="entry name" value="LbH_SAT"/>
    <property type="match status" value="1"/>
</dbReference>
<dbReference type="FunFam" id="2.160.10.10:FF:000002">
    <property type="entry name" value="Serine acetyltransferase"/>
    <property type="match status" value="1"/>
</dbReference>
<dbReference type="FunFam" id="1.10.3130.10:FF:000005">
    <property type="entry name" value="Serine acetyltransferase 4"/>
    <property type="match status" value="1"/>
</dbReference>
<dbReference type="Gene3D" id="2.160.10.10">
    <property type="entry name" value="Hexapeptide repeat proteins"/>
    <property type="match status" value="1"/>
</dbReference>
<dbReference type="Gene3D" id="1.10.3130.10">
    <property type="entry name" value="serine acetyltransferase, domain 1"/>
    <property type="match status" value="1"/>
</dbReference>
<dbReference type="InterPro" id="IPR001451">
    <property type="entry name" value="Hexapep"/>
</dbReference>
<dbReference type="InterPro" id="IPR018357">
    <property type="entry name" value="Hexapep_transf_CS"/>
</dbReference>
<dbReference type="InterPro" id="IPR045304">
    <property type="entry name" value="LbH_SAT"/>
</dbReference>
<dbReference type="InterPro" id="IPR010493">
    <property type="entry name" value="Ser_AcTrfase_N"/>
</dbReference>
<dbReference type="InterPro" id="IPR042122">
    <property type="entry name" value="Ser_AcTrfase_N_sf"/>
</dbReference>
<dbReference type="InterPro" id="IPR005881">
    <property type="entry name" value="Ser_O-AcTrfase"/>
</dbReference>
<dbReference type="InterPro" id="IPR053376">
    <property type="entry name" value="Serine_acetyltransferase"/>
</dbReference>
<dbReference type="InterPro" id="IPR011004">
    <property type="entry name" value="Trimer_LpxA-like_sf"/>
</dbReference>
<dbReference type="NCBIfam" id="TIGR01172">
    <property type="entry name" value="cysE"/>
    <property type="match status" value="1"/>
</dbReference>
<dbReference type="NCBIfam" id="NF041874">
    <property type="entry name" value="EPS_EpsC"/>
    <property type="match status" value="1"/>
</dbReference>
<dbReference type="PANTHER" id="PTHR42811">
    <property type="entry name" value="SERINE ACETYLTRANSFERASE"/>
    <property type="match status" value="1"/>
</dbReference>
<dbReference type="Pfam" id="PF00132">
    <property type="entry name" value="Hexapep"/>
    <property type="match status" value="1"/>
</dbReference>
<dbReference type="Pfam" id="PF06426">
    <property type="entry name" value="SATase_N"/>
    <property type="match status" value="1"/>
</dbReference>
<dbReference type="SMART" id="SM00971">
    <property type="entry name" value="SATase_N"/>
    <property type="match status" value="1"/>
</dbReference>
<dbReference type="SUPFAM" id="SSF51161">
    <property type="entry name" value="Trimeric LpxA-like enzymes"/>
    <property type="match status" value="1"/>
</dbReference>
<dbReference type="PROSITE" id="PS00101">
    <property type="entry name" value="HEXAPEP_TRANSFERASES"/>
    <property type="match status" value="1"/>
</dbReference>
<organism>
    <name type="scientific">Arabidopsis thaliana</name>
    <name type="common">Mouse-ear cress</name>
    <dbReference type="NCBI Taxonomy" id="3702"/>
    <lineage>
        <taxon>Eukaryota</taxon>
        <taxon>Viridiplantae</taxon>
        <taxon>Streptophyta</taxon>
        <taxon>Embryophyta</taxon>
        <taxon>Tracheophyta</taxon>
        <taxon>Spermatophyta</taxon>
        <taxon>Magnoliopsida</taxon>
        <taxon>eudicotyledons</taxon>
        <taxon>Gunneridae</taxon>
        <taxon>Pentapetalae</taxon>
        <taxon>rosids</taxon>
        <taxon>malvids</taxon>
        <taxon>Brassicales</taxon>
        <taxon>Brassicaceae</taxon>
        <taxon>Camelineae</taxon>
        <taxon>Arabidopsis</taxon>
    </lineage>
</organism>
<sequence>MNGDELPFESGFEVYAKGTHKSEFDSNLLDPRSDPIWDAIREEAKLEAEKEPILSSFLYAGILAHDCLEQALGFVLANRLQNPTLLATQLLDIFYGVMMHDKGIQSSIRHDLQAFKDRDPACLSYSSAILHLKGYHALQAYRVAHKLWNEGRKLLALALQSRISEVFGIDIHPAARIGEGILLDHGTGVVIGETAVIGNGVSILHGVTLGGTGKETGDRHPKIGEGALLGACVTILGNISIGAGAMVAAGSLVLKDVPSHSVVAGNPAKLIRVMEEQDPSLAMKHDATKEFFRHVADGYKGAQSNGPSLSAGDTEKGHTNSTS</sequence>
<keyword id="KW-0012">Acyltransferase</keyword>
<keyword id="KW-0028">Amino-acid biosynthesis</keyword>
<keyword id="KW-0963">Cytoplasm</keyword>
<keyword id="KW-1185">Reference proteome</keyword>
<keyword id="KW-0808">Transferase</keyword>
<name>SAT2_ARATH</name>
<accession>Q8S895</accession>
<accession>Q29Q39</accession>
<accession>Q9STB0</accession>
<accession>Q9ZPJ4</accession>
<proteinExistence type="evidence at protein level"/>
<protein>
    <recommendedName>
        <fullName evidence="5">Serine acetyltransferase 2</fullName>
        <shortName evidence="5">AtSAT-2</shortName>
        <shortName evidence="5">AtSERAT3;1</shortName>
        <ecNumber evidence="3">2.3.1.30</ecNumber>
    </recommendedName>
</protein>
<gene>
    <name evidence="5" type="primary">SAT2</name>
    <name evidence="4" type="synonym">SAT106</name>
    <name evidence="7" type="ordered locus">At2g17640</name>
    <name type="ORF">T17A5.1</name>
    <name evidence="8" type="ORF">T19E12.2</name>
</gene>
<evidence type="ECO:0000256" key="1">
    <source>
        <dbReference type="SAM" id="MobiDB-lite"/>
    </source>
</evidence>
<evidence type="ECO:0000269" key="2">
    <source>
    </source>
</evidence>
<evidence type="ECO:0000269" key="3">
    <source>
    </source>
</evidence>
<evidence type="ECO:0000303" key="4">
    <source>
    </source>
</evidence>
<evidence type="ECO:0000303" key="5">
    <source>
    </source>
</evidence>
<evidence type="ECO:0000305" key="6"/>
<evidence type="ECO:0000312" key="7">
    <source>
        <dbReference type="Araport" id="AT2G17640"/>
    </source>
</evidence>
<evidence type="ECO:0000312" key="8">
    <source>
        <dbReference type="EMBL" id="AAM15485.1"/>
    </source>
</evidence>